<gene>
    <name type="primary">ZBTB32</name>
</gene>
<reference key="1">
    <citation type="submission" date="2006-08" db="EMBL/GenBank/DDBJ databases">
        <title>Positive selection in transcription factor genes on the human lineage.</title>
        <authorList>
            <person name="Nickel G.C."/>
            <person name="Tefft D.L."/>
            <person name="Trevarthen K."/>
            <person name="Funt J."/>
            <person name="Adams M.D."/>
        </authorList>
    </citation>
    <scope>NUCLEOTIDE SEQUENCE [GENOMIC DNA]</scope>
</reference>
<sequence length="487" mass="52970">MSLPPIRLPSPYGSDRLVQLAARLRPALCDTLITVGGQEFPAHSLVLAGVSQQLGRRGQWALGEGISPSTFAQLLNFVYGESVELQPRELRPLQEAARALGVQSLEEACWRARGDRAKKPDPGLKKHQEEPEKPSRNAERELGDPGEKQKPEQVSRTGGREQEMLHKHSPPRGSPEMAGATQEAQQEQTRSKEKHLQAPVGQRGADGKHGVLMWLRENPGGSEESLHKLPGPLPPAGSLQTSVTPRPSWAEAPWLVGGQPALWSILLMPPRYGIPFYHSTPTTGAWQEVWREHRIPLSLNAPKGLWSQNQLASSSPTPGSLPQGPAQLSPGEMEESDQGHTGALATCAGHEDKAGCPPRPHPPPAPPARSRPYACSVCGKRFSLKHQMETHYRVHTGEKPFSCSLCPQRSRDFSAMTKHLRTHGAAPYRXXLCGAGCPSLASMQAHMRGHSPSQLPPGWTIRSTFLYSSSRPSRPSTSPCCPSSSTT</sequence>
<keyword id="KW-0238">DNA-binding</keyword>
<keyword id="KW-0479">Metal-binding</keyword>
<keyword id="KW-0539">Nucleus</keyword>
<keyword id="KW-1185">Reference proteome</keyword>
<keyword id="KW-0677">Repeat</keyword>
<keyword id="KW-0678">Repressor</keyword>
<keyword id="KW-0804">Transcription</keyword>
<keyword id="KW-0805">Transcription regulation</keyword>
<keyword id="KW-0862">Zinc</keyword>
<keyword id="KW-0863">Zinc-finger</keyword>
<proteinExistence type="inferred from homology"/>
<evidence type="ECO:0000250" key="1"/>
<evidence type="ECO:0000255" key="2">
    <source>
        <dbReference type="PROSITE-ProRule" id="PRU00037"/>
    </source>
</evidence>
<evidence type="ECO:0000255" key="3">
    <source>
        <dbReference type="PROSITE-ProRule" id="PRU00042"/>
    </source>
</evidence>
<evidence type="ECO:0000256" key="4">
    <source>
        <dbReference type="SAM" id="MobiDB-lite"/>
    </source>
</evidence>
<evidence type="ECO:0000305" key="5"/>
<name>ZBT32_PANTR</name>
<accession>A2T7E6</accession>
<comment type="function">
    <text evidence="1">DNA-binding protein that binds to the to a 5'-TGTACAGTGT-3' core sequence. May function as a transcriptional transactivator and transcriptional repressor. Probably exerts its repressor effect by preventing GATA3 from binding to DNA. May play a role in regulating the differentiation and activation of helper T-cells (By similarity).</text>
</comment>
<comment type="subunit">
    <text evidence="1">Homodimer (via PTB domain). Interacts with the N-terminal of FANCC. Interacts with ZBTB16. Interacts with GATA3 (By similarity).</text>
</comment>
<comment type="subcellular location">
    <subcellularLocation>
        <location evidence="1">Nucleus</location>
    </subcellularLocation>
    <text evidence="1">Located in nuclear speckles.</text>
</comment>
<comment type="domain">
    <text evidence="1">The C-terminal zinc finger domain functions as a transcriptional transactivator.</text>
</comment>
<comment type="domain">
    <text evidence="1">The BTB (POZ) domain possesses repressor activity.</text>
</comment>
<comment type="similarity">
    <text evidence="5">Belongs to the krueppel C2H2-type zinc-finger protein family.</text>
</comment>
<organism>
    <name type="scientific">Pan troglodytes</name>
    <name type="common">Chimpanzee</name>
    <dbReference type="NCBI Taxonomy" id="9598"/>
    <lineage>
        <taxon>Eukaryota</taxon>
        <taxon>Metazoa</taxon>
        <taxon>Chordata</taxon>
        <taxon>Craniata</taxon>
        <taxon>Vertebrata</taxon>
        <taxon>Euteleostomi</taxon>
        <taxon>Mammalia</taxon>
        <taxon>Eutheria</taxon>
        <taxon>Euarchontoglires</taxon>
        <taxon>Primates</taxon>
        <taxon>Haplorrhini</taxon>
        <taxon>Catarrhini</taxon>
        <taxon>Hominidae</taxon>
        <taxon>Pan</taxon>
    </lineage>
</organism>
<feature type="chain" id="PRO_0000285479" description="Zinc finger and BTB domain-containing protein 32">
    <location>
        <begin position="1"/>
        <end position="487"/>
    </location>
</feature>
<feature type="domain" description="BTB" evidence="2">
    <location>
        <begin position="29"/>
        <end position="87"/>
    </location>
</feature>
<feature type="zinc finger region" description="C2H2-type 1" evidence="3">
    <location>
        <begin position="373"/>
        <end position="395"/>
    </location>
</feature>
<feature type="zinc finger region" description="C2H2-type 2" evidence="3">
    <location>
        <begin position="401"/>
        <end position="423"/>
    </location>
</feature>
<feature type="zinc finger region" description="C2H2-type 3" evidence="3">
    <location>
        <begin position="428"/>
        <end position="450"/>
    </location>
</feature>
<feature type="region of interest" description="Disordered" evidence="4">
    <location>
        <begin position="113"/>
        <end position="208"/>
    </location>
</feature>
<feature type="region of interest" description="Disordered" evidence="4">
    <location>
        <begin position="308"/>
        <end position="371"/>
    </location>
</feature>
<feature type="region of interest" description="Disordered" evidence="4">
    <location>
        <begin position="468"/>
        <end position="487"/>
    </location>
</feature>
<feature type="compositionally biased region" description="Basic and acidic residues" evidence="4">
    <location>
        <begin position="113"/>
        <end position="166"/>
    </location>
</feature>
<feature type="compositionally biased region" description="Polar residues" evidence="4">
    <location>
        <begin position="308"/>
        <end position="320"/>
    </location>
</feature>
<feature type="compositionally biased region" description="Pro residues" evidence="4">
    <location>
        <begin position="357"/>
        <end position="369"/>
    </location>
</feature>
<dbReference type="EMBL" id="DQ977432">
    <property type="protein sequence ID" value="ABM92101.1"/>
    <property type="molecule type" value="Genomic_DNA"/>
</dbReference>
<dbReference type="BMRB" id="A2T7E6"/>
<dbReference type="FunCoup" id="A2T7E6">
    <property type="interactions" value="622"/>
</dbReference>
<dbReference type="STRING" id="9598.ENSPTRP00000018588"/>
<dbReference type="PaxDb" id="9598-ENSPTRP00000018588"/>
<dbReference type="eggNOG" id="KOG1721">
    <property type="taxonomic scope" value="Eukaryota"/>
</dbReference>
<dbReference type="InParanoid" id="A2T7E6"/>
<dbReference type="Proteomes" id="UP000002277">
    <property type="component" value="Unplaced"/>
</dbReference>
<dbReference type="GO" id="GO:0005634">
    <property type="term" value="C:nucleus"/>
    <property type="evidence" value="ECO:0000318"/>
    <property type="project" value="GO_Central"/>
</dbReference>
<dbReference type="GO" id="GO:0003677">
    <property type="term" value="F:DNA binding"/>
    <property type="evidence" value="ECO:0000250"/>
    <property type="project" value="UniProtKB"/>
</dbReference>
<dbReference type="GO" id="GO:0000981">
    <property type="term" value="F:DNA-binding transcription factor activity, RNA polymerase II-specific"/>
    <property type="evidence" value="ECO:0000318"/>
    <property type="project" value="GO_Central"/>
</dbReference>
<dbReference type="GO" id="GO:0008270">
    <property type="term" value="F:zinc ion binding"/>
    <property type="evidence" value="ECO:0000250"/>
    <property type="project" value="UniProtKB"/>
</dbReference>
<dbReference type="GO" id="GO:0006357">
    <property type="term" value="P:regulation of transcription by RNA polymerase II"/>
    <property type="evidence" value="ECO:0000318"/>
    <property type="project" value="GO_Central"/>
</dbReference>
<dbReference type="CDD" id="cd18218">
    <property type="entry name" value="BTB_POZ_ZBTB32_FAZF_TZFP"/>
    <property type="match status" value="1"/>
</dbReference>
<dbReference type="FunFam" id="3.30.160.60:FF:000553">
    <property type="entry name" value="Zinc finger and BTB domain-containing protein 16"/>
    <property type="match status" value="1"/>
</dbReference>
<dbReference type="FunFam" id="3.30.710.10:FF:000140">
    <property type="entry name" value="Zinc finger and BTB domain-containing protein 32"/>
    <property type="match status" value="1"/>
</dbReference>
<dbReference type="FunFam" id="3.30.160.60:FF:001279">
    <property type="entry name" value="zinc finger and BTB domain-containing protein 32"/>
    <property type="match status" value="1"/>
</dbReference>
<dbReference type="Gene3D" id="3.30.160.60">
    <property type="entry name" value="Classic Zinc Finger"/>
    <property type="match status" value="2"/>
</dbReference>
<dbReference type="Gene3D" id="3.30.710.10">
    <property type="entry name" value="Potassium Channel Kv1.1, Chain A"/>
    <property type="match status" value="1"/>
</dbReference>
<dbReference type="InterPro" id="IPR000210">
    <property type="entry name" value="BTB/POZ_dom"/>
</dbReference>
<dbReference type="InterPro" id="IPR011333">
    <property type="entry name" value="SKP1/BTB/POZ_sf"/>
</dbReference>
<dbReference type="InterPro" id="IPR036236">
    <property type="entry name" value="Znf_C2H2_sf"/>
</dbReference>
<dbReference type="InterPro" id="IPR013087">
    <property type="entry name" value="Znf_C2H2_type"/>
</dbReference>
<dbReference type="PANTHER" id="PTHR24394">
    <property type="entry name" value="ZINC FINGER PROTEIN"/>
    <property type="match status" value="1"/>
</dbReference>
<dbReference type="PANTHER" id="PTHR24394:SF48">
    <property type="entry name" value="ZINC FINGER PROTEIN 771"/>
    <property type="match status" value="1"/>
</dbReference>
<dbReference type="Pfam" id="PF00651">
    <property type="entry name" value="BTB"/>
    <property type="match status" value="1"/>
</dbReference>
<dbReference type="Pfam" id="PF00096">
    <property type="entry name" value="zf-C2H2"/>
    <property type="match status" value="1"/>
</dbReference>
<dbReference type="SMART" id="SM00225">
    <property type="entry name" value="BTB"/>
    <property type="match status" value="1"/>
</dbReference>
<dbReference type="SMART" id="SM00355">
    <property type="entry name" value="ZnF_C2H2"/>
    <property type="match status" value="3"/>
</dbReference>
<dbReference type="SUPFAM" id="SSF57667">
    <property type="entry name" value="beta-beta-alpha zinc fingers"/>
    <property type="match status" value="1"/>
</dbReference>
<dbReference type="SUPFAM" id="SSF54695">
    <property type="entry name" value="POZ domain"/>
    <property type="match status" value="1"/>
</dbReference>
<dbReference type="PROSITE" id="PS50097">
    <property type="entry name" value="BTB"/>
    <property type="match status" value="1"/>
</dbReference>
<dbReference type="PROSITE" id="PS00028">
    <property type="entry name" value="ZINC_FINGER_C2H2_1"/>
    <property type="match status" value="2"/>
</dbReference>
<dbReference type="PROSITE" id="PS50157">
    <property type="entry name" value="ZINC_FINGER_C2H2_2"/>
    <property type="match status" value="1"/>
</dbReference>
<protein>
    <recommendedName>
        <fullName>Zinc finger and BTB domain-containing protein 32</fullName>
    </recommendedName>
</protein>